<organism>
    <name type="scientific">Dechloromonas aromatica (strain RCB)</name>
    <dbReference type="NCBI Taxonomy" id="159087"/>
    <lineage>
        <taxon>Bacteria</taxon>
        <taxon>Pseudomonadati</taxon>
        <taxon>Pseudomonadota</taxon>
        <taxon>Betaproteobacteria</taxon>
        <taxon>Rhodocyclales</taxon>
        <taxon>Azonexaceae</taxon>
        <taxon>Dechloromonas</taxon>
    </lineage>
</organism>
<comment type="function">
    <text evidence="1">Transport of potassium into the cell. Likely operates as a K(+):H(+) symporter.</text>
</comment>
<comment type="catalytic activity">
    <reaction evidence="1">
        <text>K(+)(in) + H(+)(in) = K(+)(out) + H(+)(out)</text>
        <dbReference type="Rhea" id="RHEA:28490"/>
        <dbReference type="ChEBI" id="CHEBI:15378"/>
        <dbReference type="ChEBI" id="CHEBI:29103"/>
    </reaction>
    <physiologicalReaction direction="right-to-left" evidence="1">
        <dbReference type="Rhea" id="RHEA:28492"/>
    </physiologicalReaction>
</comment>
<comment type="subcellular location">
    <subcellularLocation>
        <location evidence="1">Cell inner membrane</location>
        <topology evidence="1">Multi-pass membrane protein</topology>
    </subcellularLocation>
</comment>
<comment type="similarity">
    <text evidence="1">Belongs to the HAK/KUP transporter (TC 2.A.72) family.</text>
</comment>
<name>KUP1_DECAR</name>
<feature type="chain" id="PRO_0000279781" description="Probable potassium transport system protein Kup 1">
    <location>
        <begin position="1"/>
        <end position="630"/>
    </location>
</feature>
<feature type="transmembrane region" description="Helical" evidence="1">
    <location>
        <begin position="15"/>
        <end position="35"/>
    </location>
</feature>
<feature type="transmembrane region" description="Helical" evidence="1">
    <location>
        <begin position="59"/>
        <end position="79"/>
    </location>
</feature>
<feature type="transmembrane region" description="Helical" evidence="1">
    <location>
        <begin position="109"/>
        <end position="129"/>
    </location>
</feature>
<feature type="transmembrane region" description="Helical" evidence="1">
    <location>
        <begin position="145"/>
        <end position="165"/>
    </location>
</feature>
<feature type="transmembrane region" description="Helical" evidence="1">
    <location>
        <begin position="173"/>
        <end position="193"/>
    </location>
</feature>
<feature type="transmembrane region" description="Helical" evidence="1">
    <location>
        <begin position="223"/>
        <end position="243"/>
    </location>
</feature>
<feature type="transmembrane region" description="Helical" evidence="1">
    <location>
        <begin position="255"/>
        <end position="275"/>
    </location>
</feature>
<feature type="transmembrane region" description="Helical" evidence="1">
    <location>
        <begin position="297"/>
        <end position="317"/>
    </location>
</feature>
<feature type="transmembrane region" description="Helical" evidence="1">
    <location>
        <begin position="345"/>
        <end position="365"/>
    </location>
</feature>
<feature type="transmembrane region" description="Helical" evidence="1">
    <location>
        <begin position="374"/>
        <end position="394"/>
    </location>
</feature>
<feature type="transmembrane region" description="Helical" evidence="1">
    <location>
        <begin position="405"/>
        <end position="425"/>
    </location>
</feature>
<feature type="transmembrane region" description="Helical" evidence="1">
    <location>
        <begin position="427"/>
        <end position="447"/>
    </location>
</feature>
<sequence>MGSHEQTADVTGQRFAALALAALGVVYGDIGTSPLYAVKEVFAGNHPIPVTMLNIYGSLSLIFWALVIVVSVKYVTFIMRADNRGEGGIMALIALALHTVHDKPQHAKWIMIVGVLGAAMFYGDGMVTPAMSVLSAVEGLEVATPALKPFVIPLTMVVLFILFFVQRSGTATVGAFFGPVMLVWFSALALLGVHNIVDHPAILMALNPAYGIEFLLENKAHSLVAMGNVVLAVTGAEALYADMGHFGRKPISRAWFAFVLPALVLNYFGQGALILGDPEAAKNPFFLSAPDWALYPLVGLATLATVIASQAVISGAFSVTRQAMQLGFVPRMEVQYTSDREQGQIYLPAVNWGLMVAVMILVLGFRSSNNLAAAYGIAVTGDMVITSILATVVVAKVWKWGWFKAGLLFACFLSVELVFLAANILKIPDGGWFPLVAGMGVFVLMTTWKRGRQLLSDRLRGERLELSMFLDSLASSMPTRVAGTAVFLNADPKGVPHALLHNLMHNKVLHERVVLLSVQFFDVPYVPDIDLVEVRQLKENFWSVVIQYGFKDIPNVPEALALCADAGLAFSSLETSYFIGRETLIPRLGSEMAFWREKIFVAMFRNAGSATAFFKIPSNRVVELGTQVVL</sequence>
<protein>
    <recommendedName>
        <fullName evidence="1">Probable potassium transport system protein Kup 1</fullName>
    </recommendedName>
</protein>
<reference key="1">
    <citation type="journal article" date="2009" name="BMC Genomics">
        <title>Metabolic analysis of the soil microbe Dechloromonas aromatica str. RCB: indications of a surprisingly complex life-style and cryptic anaerobic pathways for aromatic degradation.</title>
        <authorList>
            <person name="Salinero K.K."/>
            <person name="Keller K."/>
            <person name="Feil W.S."/>
            <person name="Feil H."/>
            <person name="Trong S."/>
            <person name="Di Bartolo G."/>
            <person name="Lapidus A."/>
        </authorList>
    </citation>
    <scope>NUCLEOTIDE SEQUENCE [LARGE SCALE GENOMIC DNA]</scope>
    <source>
        <strain>RCB</strain>
    </source>
</reference>
<accession>Q47IT9</accession>
<proteinExistence type="inferred from homology"/>
<evidence type="ECO:0000255" key="1">
    <source>
        <dbReference type="HAMAP-Rule" id="MF_01522"/>
    </source>
</evidence>
<dbReference type="EMBL" id="CP000089">
    <property type="protein sequence ID" value="AAZ45242.1"/>
    <property type="molecule type" value="Genomic_DNA"/>
</dbReference>
<dbReference type="STRING" id="159087.Daro_0485"/>
<dbReference type="KEGG" id="dar:Daro_0485"/>
<dbReference type="eggNOG" id="COG3158">
    <property type="taxonomic scope" value="Bacteria"/>
</dbReference>
<dbReference type="HOGENOM" id="CLU_008142_4_2_4"/>
<dbReference type="OrthoDB" id="9805577at2"/>
<dbReference type="GO" id="GO:0005886">
    <property type="term" value="C:plasma membrane"/>
    <property type="evidence" value="ECO:0007669"/>
    <property type="project" value="UniProtKB-SubCell"/>
</dbReference>
<dbReference type="GO" id="GO:0015079">
    <property type="term" value="F:potassium ion transmembrane transporter activity"/>
    <property type="evidence" value="ECO:0007669"/>
    <property type="project" value="UniProtKB-UniRule"/>
</dbReference>
<dbReference type="GO" id="GO:0015293">
    <property type="term" value="F:symporter activity"/>
    <property type="evidence" value="ECO:0007669"/>
    <property type="project" value="UniProtKB-UniRule"/>
</dbReference>
<dbReference type="HAMAP" id="MF_01522">
    <property type="entry name" value="Kup"/>
    <property type="match status" value="1"/>
</dbReference>
<dbReference type="InterPro" id="IPR003855">
    <property type="entry name" value="K+_transporter"/>
</dbReference>
<dbReference type="InterPro" id="IPR053952">
    <property type="entry name" value="K_trans_C"/>
</dbReference>
<dbReference type="InterPro" id="IPR053951">
    <property type="entry name" value="K_trans_N"/>
</dbReference>
<dbReference type="InterPro" id="IPR023051">
    <property type="entry name" value="Kup"/>
</dbReference>
<dbReference type="PANTHER" id="PTHR30540:SF79">
    <property type="entry name" value="LOW AFFINITY POTASSIUM TRANSPORT SYSTEM PROTEIN KUP"/>
    <property type="match status" value="1"/>
</dbReference>
<dbReference type="PANTHER" id="PTHR30540">
    <property type="entry name" value="OSMOTIC STRESS POTASSIUM TRANSPORTER"/>
    <property type="match status" value="1"/>
</dbReference>
<dbReference type="Pfam" id="PF02705">
    <property type="entry name" value="K_trans"/>
    <property type="match status" value="1"/>
</dbReference>
<dbReference type="Pfam" id="PF22776">
    <property type="entry name" value="K_trans_C"/>
    <property type="match status" value="1"/>
</dbReference>
<gene>
    <name evidence="1" type="primary">kup1</name>
    <name type="ordered locus">Daro_0485</name>
</gene>
<keyword id="KW-0997">Cell inner membrane</keyword>
<keyword id="KW-1003">Cell membrane</keyword>
<keyword id="KW-0406">Ion transport</keyword>
<keyword id="KW-0472">Membrane</keyword>
<keyword id="KW-0630">Potassium</keyword>
<keyword id="KW-0633">Potassium transport</keyword>
<keyword id="KW-0769">Symport</keyword>
<keyword id="KW-0812">Transmembrane</keyword>
<keyword id="KW-1133">Transmembrane helix</keyword>
<keyword id="KW-0813">Transport</keyword>